<comment type="function">
    <text evidence="1">This protein specifically catalyzes the removal of signal peptides from prolipoproteins.</text>
</comment>
<comment type="catalytic activity">
    <reaction evidence="1">
        <text>Release of signal peptides from bacterial membrane prolipoproteins. Hydrolyzes -Xaa-Yaa-Zaa-|-(S,diacylglyceryl)Cys-, in which Xaa is hydrophobic (preferably Leu), and Yaa (Ala or Ser) and Zaa (Gly or Ala) have small, neutral side chains.</text>
        <dbReference type="EC" id="3.4.23.36"/>
    </reaction>
</comment>
<comment type="pathway">
    <text evidence="1">Protein modification; lipoprotein biosynthesis (signal peptide cleavage).</text>
</comment>
<comment type="subcellular location">
    <subcellularLocation>
        <location evidence="1">Cell membrane</location>
        <topology evidence="1">Multi-pass membrane protein</topology>
    </subcellularLocation>
</comment>
<comment type="similarity">
    <text evidence="1">Belongs to the peptidase A8 family.</text>
</comment>
<organism>
    <name type="scientific">Streptococcus agalactiae serotype III (strain NEM316)</name>
    <dbReference type="NCBI Taxonomy" id="211110"/>
    <lineage>
        <taxon>Bacteria</taxon>
        <taxon>Bacillati</taxon>
        <taxon>Bacillota</taxon>
        <taxon>Bacilli</taxon>
        <taxon>Lactobacillales</taxon>
        <taxon>Streptococcaceae</taxon>
        <taxon>Streptococcus</taxon>
    </lineage>
</organism>
<keyword id="KW-0064">Aspartyl protease</keyword>
<keyword id="KW-1003">Cell membrane</keyword>
<keyword id="KW-0378">Hydrolase</keyword>
<keyword id="KW-0472">Membrane</keyword>
<keyword id="KW-0645">Protease</keyword>
<keyword id="KW-0812">Transmembrane</keyword>
<keyword id="KW-1133">Transmembrane helix</keyword>
<evidence type="ECO:0000255" key="1">
    <source>
        <dbReference type="HAMAP-Rule" id="MF_00161"/>
    </source>
</evidence>
<gene>
    <name evidence="1" type="primary">lspA</name>
    <name type="ordered locus">gbs1436</name>
</gene>
<reference key="1">
    <citation type="journal article" date="2002" name="Mol. Microbiol.">
        <title>Genome sequence of Streptococcus agalactiae, a pathogen causing invasive neonatal disease.</title>
        <authorList>
            <person name="Glaser P."/>
            <person name="Rusniok C."/>
            <person name="Buchrieser C."/>
            <person name="Chevalier F."/>
            <person name="Frangeul L."/>
            <person name="Msadek T."/>
            <person name="Zouine M."/>
            <person name="Couve E."/>
            <person name="Lalioui L."/>
            <person name="Poyart C."/>
            <person name="Trieu-Cuot P."/>
            <person name="Kunst F."/>
        </authorList>
    </citation>
    <scope>NUCLEOTIDE SEQUENCE [LARGE SCALE GENOMIC DNA]</scope>
    <source>
        <strain>NEM316</strain>
    </source>
</reference>
<protein>
    <recommendedName>
        <fullName evidence="1">Lipoprotein signal peptidase</fullName>
        <ecNumber evidence="1">3.4.23.36</ecNumber>
    </recommendedName>
    <alternativeName>
        <fullName evidence="1">Prolipoprotein signal peptidase</fullName>
    </alternativeName>
    <alternativeName>
        <fullName evidence="1">Signal peptidase II</fullName>
        <shortName evidence="1">SPase II</shortName>
    </alternativeName>
</protein>
<accession>Q8E4G5</accession>
<dbReference type="EC" id="3.4.23.36" evidence="1"/>
<dbReference type="EMBL" id="AL766850">
    <property type="protein sequence ID" value="CAD47095.1"/>
    <property type="molecule type" value="Genomic_DNA"/>
</dbReference>
<dbReference type="RefSeq" id="WP_001226250.1">
    <property type="nucleotide sequence ID" value="NC_004368.1"/>
</dbReference>
<dbReference type="SMR" id="Q8E4G5"/>
<dbReference type="GeneID" id="66886232"/>
<dbReference type="KEGG" id="san:gbs1436"/>
<dbReference type="eggNOG" id="COG0597">
    <property type="taxonomic scope" value="Bacteria"/>
</dbReference>
<dbReference type="HOGENOM" id="CLU_083252_3_3_9"/>
<dbReference type="UniPathway" id="UPA00665"/>
<dbReference type="Proteomes" id="UP000000823">
    <property type="component" value="Chromosome"/>
</dbReference>
<dbReference type="GO" id="GO:0005886">
    <property type="term" value="C:plasma membrane"/>
    <property type="evidence" value="ECO:0007669"/>
    <property type="project" value="UniProtKB-SubCell"/>
</dbReference>
<dbReference type="GO" id="GO:0004190">
    <property type="term" value="F:aspartic-type endopeptidase activity"/>
    <property type="evidence" value="ECO:0007669"/>
    <property type="project" value="UniProtKB-UniRule"/>
</dbReference>
<dbReference type="GO" id="GO:0006508">
    <property type="term" value="P:proteolysis"/>
    <property type="evidence" value="ECO:0007669"/>
    <property type="project" value="UniProtKB-KW"/>
</dbReference>
<dbReference type="HAMAP" id="MF_00161">
    <property type="entry name" value="LspA"/>
    <property type="match status" value="1"/>
</dbReference>
<dbReference type="InterPro" id="IPR001872">
    <property type="entry name" value="Peptidase_A8"/>
</dbReference>
<dbReference type="NCBIfam" id="TIGR00077">
    <property type="entry name" value="lspA"/>
    <property type="match status" value="1"/>
</dbReference>
<dbReference type="PANTHER" id="PTHR33695">
    <property type="entry name" value="LIPOPROTEIN SIGNAL PEPTIDASE"/>
    <property type="match status" value="1"/>
</dbReference>
<dbReference type="PANTHER" id="PTHR33695:SF1">
    <property type="entry name" value="LIPOPROTEIN SIGNAL PEPTIDASE"/>
    <property type="match status" value="1"/>
</dbReference>
<dbReference type="Pfam" id="PF01252">
    <property type="entry name" value="Peptidase_A8"/>
    <property type="match status" value="1"/>
</dbReference>
<dbReference type="PRINTS" id="PR00781">
    <property type="entry name" value="LIPOSIGPTASE"/>
</dbReference>
<dbReference type="PROSITE" id="PS00855">
    <property type="entry name" value="SPASE_II"/>
    <property type="match status" value="1"/>
</dbReference>
<proteinExistence type="inferred from homology"/>
<name>LSPA_STRA3</name>
<feature type="chain" id="PRO_0000289436" description="Lipoprotein signal peptidase">
    <location>
        <begin position="1"/>
        <end position="154"/>
    </location>
</feature>
<feature type="transmembrane region" description="Helical" evidence="1">
    <location>
        <begin position="4"/>
        <end position="24"/>
    </location>
</feature>
<feature type="transmembrane region" description="Helical" evidence="1">
    <location>
        <begin position="62"/>
        <end position="82"/>
    </location>
</feature>
<feature type="transmembrane region" description="Helical" evidence="1">
    <location>
        <begin position="84"/>
        <end position="104"/>
    </location>
</feature>
<feature type="transmembrane region" description="Helical" evidence="1">
    <location>
        <begin position="125"/>
        <end position="145"/>
    </location>
</feature>
<feature type="active site" evidence="1">
    <location>
        <position position="114"/>
    </location>
</feature>
<feature type="active site" evidence="1">
    <location>
        <position position="130"/>
    </location>
</feature>
<sequence>MRKIIIPIITILLIALDQLSKLWIVKHIELNQIKEFIPNIVSLTYLRNYGAAFSILQNQQWLFTLITIFVVCVAIIYLMKHINGSYWLLISLTLIISGGLGNFIDRLRLGYVVDMVHLDFINFAIFNVADSYLTIGIICLMIALWKEESNGNHN</sequence>